<organism>
    <name type="scientific">Caulobacter vibrioides (strain NA1000 / CB15N)</name>
    <name type="common">Caulobacter crescentus</name>
    <dbReference type="NCBI Taxonomy" id="565050"/>
    <lineage>
        <taxon>Bacteria</taxon>
        <taxon>Pseudomonadati</taxon>
        <taxon>Pseudomonadota</taxon>
        <taxon>Alphaproteobacteria</taxon>
        <taxon>Caulobacterales</taxon>
        <taxon>Caulobacteraceae</taxon>
        <taxon>Caulobacter</taxon>
    </lineage>
</organism>
<sequence>MEAGTRTPTPVLSFGEPSIDGCFPGGGLPLGGWHEVTGAGLEDETGAAPAAFVTQLIRGLTDRKGGAVVWVARRADLFAPGLLGLGFPAARLIQVRARDEAETLSLLEDALSTQGVAAAVAEAEAPDLTAGRRLQLACEKRGGFGVVLHRRPYGGRAGGKPRLVSGSASFSRWRIAPAPSGPPPDDIGLGPPRWRVELERCRGGRPGGWILQAQEAGHGPHPFRLVSQLADHDVAAAEAGRRFG</sequence>
<reference key="1">
    <citation type="journal article" date="2010" name="J. Bacteriol.">
        <title>The genetic basis of laboratory adaptation in Caulobacter crescentus.</title>
        <authorList>
            <person name="Marks M.E."/>
            <person name="Castro-Rojas C.M."/>
            <person name="Teiling C."/>
            <person name="Du L."/>
            <person name="Kapatral V."/>
            <person name="Walunas T.L."/>
            <person name="Crosson S."/>
        </authorList>
    </citation>
    <scope>NUCLEOTIDE SEQUENCE [LARGE SCALE GENOMIC DNA]</scope>
    <source>
        <strain>NA1000 / CB15N</strain>
    </source>
</reference>
<reference key="2">
    <citation type="journal article" date="2005" name="Nucleic Acids Res.">
        <title>An SOS-regulated operon involved in damage-inducible mutagenesis in Caulobacter crescentus.</title>
        <authorList>
            <person name="Galhardo R.S."/>
            <person name="Rocha R.P."/>
            <person name="Marques M.V."/>
            <person name="Menck C.F.M."/>
        </authorList>
    </citation>
    <scope>FUNCTION</scope>
</reference>
<feature type="chain" id="PRO_0000378298" description="Protein ImuA">
    <location>
        <begin position="1"/>
        <end position="244"/>
    </location>
</feature>
<evidence type="ECO:0000269" key="1">
    <source>
    </source>
</evidence>
<evidence type="ECO:0000305" key="2"/>
<proteinExistence type="evidence at transcript level"/>
<protein>
    <recommendedName>
        <fullName>Protein ImuA</fullName>
    </recommendedName>
</protein>
<comment type="function">
    <text evidence="1">Along with DnaE2 and ImuB is required for the error-prone processing of DNA lesions.</text>
</comment>
<comment type="induction">
    <text>Up-regulated in response to DNA damage in a RecA-dependent manner.</text>
</comment>
<comment type="sequence caution" evidence="2">
    <conflict type="erroneous initiation">
        <sequence resource="EMBL-CDS" id="ACL96783"/>
    </conflict>
</comment>
<keyword id="KW-0227">DNA damage</keyword>
<keyword id="KW-0234">DNA repair</keyword>
<keyword id="KW-1185">Reference proteome</keyword>
<name>IMUA_CAUVN</name>
<dbReference type="EMBL" id="CP001340">
    <property type="protein sequence ID" value="ACL96783.1"/>
    <property type="status" value="ALT_INIT"/>
    <property type="molecule type" value="Genomic_DNA"/>
</dbReference>
<dbReference type="RefSeq" id="YP_002518691.1">
    <property type="nucleotide sequence ID" value="NC_011916.1"/>
</dbReference>
<dbReference type="SMR" id="B8H429"/>
<dbReference type="GeneID" id="7330343"/>
<dbReference type="KEGG" id="ccs:CCNA_03319"/>
<dbReference type="PATRIC" id="fig|565050.3.peg.3236"/>
<dbReference type="HOGENOM" id="CLU_065750_1_0_5"/>
<dbReference type="OrthoDB" id="7202530at2"/>
<dbReference type="PhylomeDB" id="B8H429"/>
<dbReference type="Proteomes" id="UP000001364">
    <property type="component" value="Chromosome"/>
</dbReference>
<dbReference type="GO" id="GO:0006281">
    <property type="term" value="P:DNA repair"/>
    <property type="evidence" value="ECO:0007669"/>
    <property type="project" value="UniProtKB-KW"/>
</dbReference>
<dbReference type="Gene3D" id="3.40.50.300">
    <property type="entry name" value="P-loop containing nucleotide triphosphate hydrolases"/>
    <property type="match status" value="1"/>
</dbReference>
<dbReference type="InterPro" id="IPR017026">
    <property type="entry name" value="ImuA"/>
</dbReference>
<dbReference type="InterPro" id="IPR027417">
    <property type="entry name" value="P-loop_NTPase"/>
</dbReference>
<dbReference type="PIRSF" id="PIRSF034285">
    <property type="entry name" value="UCP034285"/>
    <property type="match status" value="1"/>
</dbReference>
<dbReference type="SUPFAM" id="SSF52540">
    <property type="entry name" value="P-loop containing nucleoside triphosphate hydrolases"/>
    <property type="match status" value="1"/>
</dbReference>
<accession>B8H429</accession>
<gene>
    <name type="primary">imuA</name>
    <name type="ordered locus">CCNA_03319</name>
</gene>